<comment type="function">
    <text evidence="6 8">Probably acts as an adapter for ATPase cdc-48.1 and/or cdc-48.2, conferring substrate specificity. Involved in the lysosomal clearance of cellular material in diet restricted conditions (PubMed:30595383).</text>
</comment>
<comment type="subunit">
    <text evidence="5">Interacts with cdc-48.1 (via N-terminus) and cdc-48.2 (via N-terminus).</text>
</comment>
<comment type="tissue specificity">
    <text evidence="4">Expressed in the pharynx and some head neurons.</text>
</comment>
<comment type="developmental stage">
    <text evidence="4">Expressed at L4 larval stage and in adults. Expressed at low levels in embryos and between the L1 and L3 larval stages.</text>
</comment>
<comment type="induction">
    <text evidence="6">Up-regulated in response to starvation (at protein level).</text>
</comment>
<comment type="disruption phenotype">
    <text evidence="6">Reduced lifespan (PubMed:30595383). Prolonged expression of the lysosomal protein glo-1 12 hours after starvation (PubMed:30595383).</text>
</comment>
<reference evidence="9" key="1">
    <citation type="journal article" date="1998" name="Science">
        <title>Genome sequence of the nematode C. elegans: a platform for investigating biology.</title>
        <authorList>
            <consortium name="The C. elegans sequencing consortium"/>
        </authorList>
    </citation>
    <scope>NUCLEOTIDE SEQUENCE [LARGE SCALE GENOMIC DNA]</scope>
    <source>
        <strain evidence="9">Bristol N2</strain>
    </source>
</reference>
<reference evidence="7" key="2">
    <citation type="journal article" date="2007" name="Biochem. Biophys. Res. Commun.">
        <title>Differential expression pattern of UBX family genes in Caenorhabditis elegans.</title>
        <authorList>
            <person name="Yamauchi S."/>
            <person name="Sasagawa Y."/>
            <person name="Ogura T."/>
            <person name="Yamanaka K."/>
        </authorList>
    </citation>
    <scope>TISSUE SPECIFICITY</scope>
    <scope>DEVELOPMENTAL STAGE</scope>
</reference>
<reference evidence="7" key="3">
    <citation type="journal article" date="2010" name="Genes Cells">
        <title>Caenorhabditis elegans UBX cofactors for CDC-48/p97 control spermatogenesis.</title>
        <authorList>
            <person name="Sasagawa Y."/>
            <person name="Yamanaka K."/>
            <person name="Saito-Sasagawa Y."/>
            <person name="Ogura T."/>
        </authorList>
    </citation>
    <scope>FUNCTION</scope>
    <scope>INTERACTION WITH CDC-48.1 AND CDC-48.2</scope>
</reference>
<reference key="4">
    <citation type="journal article" date="2019" name="Biochem. Biophys. Res. Commun.">
        <title>Functional characterization of UBXN-6, a C-terminal cofactor of CDC-48, in C. elegans.</title>
        <authorList>
            <person name="Mojumder S."/>
            <person name="Sawamura R."/>
            <person name="Murayama Y."/>
            <person name="Ogura T."/>
            <person name="Yamanaka K."/>
        </authorList>
    </citation>
    <scope>FUNCTION</scope>
    <scope>INDUCTION BY STARVATION</scope>
    <scope>DISRUPTION PHENOTYPE</scope>
</reference>
<gene>
    <name evidence="10" type="primary">ubxn-6</name>
    <name evidence="10" type="ORF">H06H21.6</name>
</gene>
<protein>
    <recommendedName>
        <fullName evidence="7">UBX domain-containing protein 6</fullName>
    </recommendedName>
</protein>
<dbReference type="EMBL" id="BX284604">
    <property type="protein sequence ID" value="CCD72219.1"/>
    <property type="molecule type" value="Genomic_DNA"/>
</dbReference>
<dbReference type="RefSeq" id="NP_500648.2">
    <property type="nucleotide sequence ID" value="NM_068247.8"/>
</dbReference>
<dbReference type="SMR" id="Q8WTJ4"/>
<dbReference type="FunCoup" id="Q8WTJ4">
    <property type="interactions" value="2520"/>
</dbReference>
<dbReference type="STRING" id="6239.H06H21.6.1"/>
<dbReference type="PaxDb" id="6239-H06H21.6.1"/>
<dbReference type="PeptideAtlas" id="Q8WTJ4"/>
<dbReference type="EnsemblMetazoa" id="H06H21.6.1">
    <property type="protein sequence ID" value="H06H21.6.1"/>
    <property type="gene ID" value="WBGene00019163"/>
</dbReference>
<dbReference type="GeneID" id="177253"/>
<dbReference type="KEGG" id="cel:CELE_H06H21.6"/>
<dbReference type="UCSC" id="H06H21.6.1">
    <property type="organism name" value="c. elegans"/>
</dbReference>
<dbReference type="AGR" id="WB:WBGene00019163"/>
<dbReference type="CTD" id="177253"/>
<dbReference type="WormBase" id="H06H21.6">
    <property type="protein sequence ID" value="CE33662"/>
    <property type="gene ID" value="WBGene00019163"/>
    <property type="gene designation" value="ubxn-6"/>
</dbReference>
<dbReference type="eggNOG" id="KOG2699">
    <property type="taxonomic scope" value="Eukaryota"/>
</dbReference>
<dbReference type="GeneTree" id="ENSGT00940000157273"/>
<dbReference type="HOGENOM" id="CLU_033280_2_0_1"/>
<dbReference type="InParanoid" id="Q8WTJ4"/>
<dbReference type="OMA" id="RMQKNEP"/>
<dbReference type="OrthoDB" id="49605at2759"/>
<dbReference type="PhylomeDB" id="Q8WTJ4"/>
<dbReference type="PRO" id="PR:Q8WTJ4"/>
<dbReference type="Proteomes" id="UP000001940">
    <property type="component" value="Chromosome IV"/>
</dbReference>
<dbReference type="Bgee" id="WBGene00019163">
    <property type="expression patterns" value="Expressed in germ line (C elegans) and 4 other cell types or tissues"/>
</dbReference>
<dbReference type="GO" id="GO:0005737">
    <property type="term" value="C:cytoplasm"/>
    <property type="evidence" value="ECO:0000318"/>
    <property type="project" value="GO_Central"/>
</dbReference>
<dbReference type="CDD" id="cd10460">
    <property type="entry name" value="PUB_UBXD1"/>
    <property type="match status" value="1"/>
</dbReference>
<dbReference type="CDD" id="cd16119">
    <property type="entry name" value="UBX_UBXN6"/>
    <property type="match status" value="1"/>
</dbReference>
<dbReference type="Gene3D" id="1.20.58.2190">
    <property type="match status" value="1"/>
</dbReference>
<dbReference type="Gene3D" id="3.10.20.90">
    <property type="entry name" value="Phosphatidylinositol 3-kinase Catalytic Subunit, Chain A, domain 1"/>
    <property type="match status" value="1"/>
</dbReference>
<dbReference type="InterPro" id="IPR036339">
    <property type="entry name" value="PUB-like_dom_sf"/>
</dbReference>
<dbReference type="InterPro" id="IPR018997">
    <property type="entry name" value="PUB_domain"/>
</dbReference>
<dbReference type="InterPro" id="IPR029071">
    <property type="entry name" value="Ubiquitin-like_domsf"/>
</dbReference>
<dbReference type="InterPro" id="IPR001012">
    <property type="entry name" value="UBX_dom"/>
</dbReference>
<dbReference type="InterPro" id="IPR042774">
    <property type="entry name" value="UBXN6_PUB"/>
</dbReference>
<dbReference type="PANTHER" id="PTHR23153:SF38">
    <property type="entry name" value="UBX DOMAIN-CONTAINING PROTEIN 6"/>
    <property type="match status" value="1"/>
</dbReference>
<dbReference type="PANTHER" id="PTHR23153">
    <property type="entry name" value="UBX-RELATED"/>
    <property type="match status" value="1"/>
</dbReference>
<dbReference type="Pfam" id="PF09409">
    <property type="entry name" value="PUB"/>
    <property type="match status" value="1"/>
</dbReference>
<dbReference type="SMART" id="SM00580">
    <property type="entry name" value="PUG"/>
    <property type="match status" value="1"/>
</dbReference>
<dbReference type="SUPFAM" id="SSF143503">
    <property type="entry name" value="PUG domain-like"/>
    <property type="match status" value="1"/>
</dbReference>
<dbReference type="SUPFAM" id="SSF54236">
    <property type="entry name" value="Ubiquitin-like"/>
    <property type="match status" value="1"/>
</dbReference>
<dbReference type="PROSITE" id="PS50033">
    <property type="entry name" value="UBX"/>
    <property type="match status" value="1"/>
</dbReference>
<feature type="chain" id="PRO_0000444377" description="UBX domain-containing protein 6">
    <location>
        <begin position="1"/>
        <end position="437"/>
    </location>
</feature>
<feature type="domain" description="PUB" evidence="1">
    <location>
        <begin position="179"/>
        <end position="251"/>
    </location>
</feature>
<feature type="domain" description="UBX" evidence="2">
    <location>
        <begin position="332"/>
        <end position="409"/>
    </location>
</feature>
<feature type="region of interest" description="Disordered" evidence="3">
    <location>
        <begin position="1"/>
        <end position="45"/>
    </location>
</feature>
<feature type="region of interest" description="Disordered" evidence="3">
    <location>
        <begin position="89"/>
        <end position="109"/>
    </location>
</feature>
<feature type="compositionally biased region" description="Basic residues" evidence="3">
    <location>
        <begin position="7"/>
        <end position="18"/>
    </location>
</feature>
<name>UBXN6_CAEEL</name>
<sequence length="437" mass="49000">MNSFKKFLNKKRVQNHFKKSGEGVRLSSGESSSQPSAHAGAAQGGQIDRVAAADIAAQAAFKRMQKNEPQQNAGKRRIQMIAKRELEEERRQVEDLNISGTSSLQQPDREQHLEHSSAISRVLYTSELLGEHHIRSKADLLEDIKNFLSDQISEADDENDKVIAAVLMLYSLNKKHPKETAIETICKYCQNILEHPGEDKYKSIRLGNKAFQERVASVVGGRAFLEAVGFTEKSEGEDKFLVFTKPSDVHLVEALEALKDGQAVPIKVARNLEIFKLKEGQKPKAPKLADDFYNLSTAELKAEQRNKEMQVERMLTLRTKEMRQKDEQMTNYRYKYTLIRVRLPGNLLMQGVFGCHEPFSAVRVFVASTLSDALSTSEFTLRDAASQLVEDESASLAQLSLAPAALLHVVFAENLSDYGQIVADEHIEIIQELEASD</sequence>
<evidence type="ECO:0000255" key="1"/>
<evidence type="ECO:0000255" key="2">
    <source>
        <dbReference type="PROSITE-ProRule" id="PRU00215"/>
    </source>
</evidence>
<evidence type="ECO:0000256" key="3">
    <source>
        <dbReference type="SAM" id="MobiDB-lite"/>
    </source>
</evidence>
<evidence type="ECO:0000269" key="4">
    <source>
    </source>
</evidence>
<evidence type="ECO:0000269" key="5">
    <source>
    </source>
</evidence>
<evidence type="ECO:0000269" key="6">
    <source>
    </source>
</evidence>
<evidence type="ECO:0000305" key="7"/>
<evidence type="ECO:0000305" key="8">
    <source>
    </source>
</evidence>
<evidence type="ECO:0000312" key="9">
    <source>
        <dbReference type="Proteomes" id="UP000001940"/>
    </source>
</evidence>
<evidence type="ECO:0000312" key="10">
    <source>
        <dbReference type="WormBase" id="H06H21.6"/>
    </source>
</evidence>
<proteinExistence type="evidence at protein level"/>
<organism evidence="9">
    <name type="scientific">Caenorhabditis elegans</name>
    <dbReference type="NCBI Taxonomy" id="6239"/>
    <lineage>
        <taxon>Eukaryota</taxon>
        <taxon>Metazoa</taxon>
        <taxon>Ecdysozoa</taxon>
        <taxon>Nematoda</taxon>
        <taxon>Chromadorea</taxon>
        <taxon>Rhabditida</taxon>
        <taxon>Rhabditina</taxon>
        <taxon>Rhabditomorpha</taxon>
        <taxon>Rhabditoidea</taxon>
        <taxon>Rhabditidae</taxon>
        <taxon>Peloderinae</taxon>
        <taxon>Caenorhabditis</taxon>
    </lineage>
</organism>
<accession>Q8WTJ4</accession>
<keyword id="KW-1185">Reference proteome</keyword>